<dbReference type="EMBL" id="AF283463">
    <property type="protein sequence ID" value="AAG53612.1"/>
    <property type="molecule type" value="mRNA"/>
</dbReference>
<dbReference type="EMBL" id="AL834449">
    <property type="protein sequence ID" value="CAD39109.1"/>
    <property type="molecule type" value="mRNA"/>
</dbReference>
<dbReference type="EMBL" id="AY358297">
    <property type="protein sequence ID" value="AAQ88664.1"/>
    <property type="molecule type" value="mRNA"/>
</dbReference>
<dbReference type="EMBL" id="CR456360">
    <property type="protein sequence ID" value="CAG30246.1"/>
    <property type="molecule type" value="mRNA"/>
</dbReference>
<dbReference type="EMBL" id="AC058790">
    <property type="status" value="NOT_ANNOTATED_CDS"/>
    <property type="molecule type" value="Genomic_DNA"/>
</dbReference>
<dbReference type="EMBL" id="AC007663">
    <property type="status" value="NOT_ANNOTATED_CDS"/>
    <property type="molecule type" value="Genomic_DNA"/>
</dbReference>
<dbReference type="EMBL" id="CH471176">
    <property type="protein sequence ID" value="EAX02975.1"/>
    <property type="molecule type" value="Genomic_DNA"/>
</dbReference>
<dbReference type="EMBL" id="CH471176">
    <property type="protein sequence ID" value="EAX02976.1"/>
    <property type="molecule type" value="Genomic_DNA"/>
</dbReference>
<dbReference type="EMBL" id="BC011787">
    <property type="protein sequence ID" value="AAH11787.1"/>
    <property type="molecule type" value="mRNA"/>
</dbReference>
<dbReference type="CCDS" id="CCDS13777.1"/>
<dbReference type="RefSeq" id="NP_075380.1">
    <property type="nucleotide sequence ID" value="NM_023004.6"/>
</dbReference>
<dbReference type="PDB" id="1OZN">
    <property type="method" value="X-ray"/>
    <property type="resolution" value="1.52 A"/>
    <property type="chains" value="A=26-310"/>
</dbReference>
<dbReference type="PDB" id="1P8T">
    <property type="method" value="X-ray"/>
    <property type="resolution" value="3.20 A"/>
    <property type="chains" value="A=27-311"/>
</dbReference>
<dbReference type="PDBsum" id="1OZN"/>
<dbReference type="PDBsum" id="1P8T"/>
<dbReference type="EMDB" id="EMD-13149"/>
<dbReference type="SMR" id="Q9BZR6"/>
<dbReference type="BioGRID" id="122388">
    <property type="interactions" value="44"/>
</dbReference>
<dbReference type="CORUM" id="Q9BZR6"/>
<dbReference type="FunCoup" id="Q9BZR6">
    <property type="interactions" value="155"/>
</dbReference>
<dbReference type="IntAct" id="Q9BZR6">
    <property type="interactions" value="30"/>
</dbReference>
<dbReference type="MINT" id="Q9BZR6"/>
<dbReference type="STRING" id="9606.ENSP00000043402"/>
<dbReference type="GlyCosmos" id="Q9BZR6">
    <property type="glycosylation" value="3 sites, 1 glycan"/>
</dbReference>
<dbReference type="GlyGen" id="Q9BZR6">
    <property type="glycosylation" value="7 sites, 3 N-linked glycans (4 sites), 2 O-linked glycans (3 sites)"/>
</dbReference>
<dbReference type="iPTMnet" id="Q9BZR6"/>
<dbReference type="PhosphoSitePlus" id="Q9BZR6"/>
<dbReference type="BioMuta" id="RTN4R"/>
<dbReference type="jPOST" id="Q9BZR6"/>
<dbReference type="MassIVE" id="Q9BZR6"/>
<dbReference type="PaxDb" id="9606-ENSP00000043402"/>
<dbReference type="PeptideAtlas" id="Q9BZR6"/>
<dbReference type="ProteomicsDB" id="79894"/>
<dbReference type="Antibodypedia" id="23162">
    <property type="antibodies" value="370 antibodies from 33 providers"/>
</dbReference>
<dbReference type="DNASU" id="65078"/>
<dbReference type="Ensembl" id="ENST00000043402.8">
    <property type="protein sequence ID" value="ENSP00000043402.7"/>
    <property type="gene ID" value="ENSG00000040608.14"/>
</dbReference>
<dbReference type="GeneID" id="65078"/>
<dbReference type="KEGG" id="hsa:65078"/>
<dbReference type="MANE-Select" id="ENST00000043402.8">
    <property type="protein sequence ID" value="ENSP00000043402.7"/>
    <property type="RefSeq nucleotide sequence ID" value="NM_023004.6"/>
    <property type="RefSeq protein sequence ID" value="NP_075380.1"/>
</dbReference>
<dbReference type="UCSC" id="uc002zrv.4">
    <property type="organism name" value="human"/>
</dbReference>
<dbReference type="AGR" id="HGNC:18601"/>
<dbReference type="CTD" id="65078"/>
<dbReference type="DisGeNET" id="65078"/>
<dbReference type="GeneCards" id="RTN4R"/>
<dbReference type="HGNC" id="HGNC:18601">
    <property type="gene designation" value="RTN4R"/>
</dbReference>
<dbReference type="HPA" id="ENSG00000040608">
    <property type="expression patterns" value="Tissue enriched (brain)"/>
</dbReference>
<dbReference type="MalaCards" id="RTN4R"/>
<dbReference type="MIM" id="181500">
    <property type="type" value="phenotype"/>
</dbReference>
<dbReference type="MIM" id="605566">
    <property type="type" value="gene"/>
</dbReference>
<dbReference type="neXtProt" id="NX_Q9BZR6"/>
<dbReference type="OpenTargets" id="ENSG00000040608"/>
<dbReference type="PharmGKB" id="PA38600"/>
<dbReference type="VEuPathDB" id="HostDB:ENSG00000040608"/>
<dbReference type="eggNOG" id="KOG0619">
    <property type="taxonomic scope" value="Eukaryota"/>
</dbReference>
<dbReference type="GeneTree" id="ENSGT00940000160711"/>
<dbReference type="HOGENOM" id="CLU_000288_18_6_1"/>
<dbReference type="InParanoid" id="Q9BZR6"/>
<dbReference type="OMA" id="RSQCRMA"/>
<dbReference type="OrthoDB" id="546383at2759"/>
<dbReference type="PAN-GO" id="Q9BZR6">
    <property type="GO annotations" value="5 GO annotations based on evolutionary models"/>
</dbReference>
<dbReference type="PhylomeDB" id="Q9BZR6"/>
<dbReference type="TreeFam" id="TF330080"/>
<dbReference type="PathwayCommons" id="Q9BZR6"/>
<dbReference type="Reactome" id="R-HSA-193634">
    <property type="pathway name" value="Axonal growth inhibition (RHOA activation)"/>
</dbReference>
<dbReference type="SignaLink" id="Q9BZR6"/>
<dbReference type="BioGRID-ORCS" id="65078">
    <property type="hits" value="23 hits in 1155 CRISPR screens"/>
</dbReference>
<dbReference type="ChiTaRS" id="RTN4R">
    <property type="organism name" value="human"/>
</dbReference>
<dbReference type="EvolutionaryTrace" id="Q9BZR6"/>
<dbReference type="GeneWiki" id="Reticulon_4_receptor"/>
<dbReference type="GenomeRNAi" id="65078"/>
<dbReference type="Pharos" id="Q9BZR6">
    <property type="development level" value="Tbio"/>
</dbReference>
<dbReference type="PRO" id="PR:Q9BZR6"/>
<dbReference type="Proteomes" id="UP000005640">
    <property type="component" value="Chromosome 22"/>
</dbReference>
<dbReference type="RNAct" id="Q9BZR6">
    <property type="molecule type" value="protein"/>
</dbReference>
<dbReference type="Bgee" id="ENSG00000040608">
    <property type="expression patterns" value="Expressed in right hemisphere of cerebellum and 112 other cell types or tissues"/>
</dbReference>
<dbReference type="ExpressionAtlas" id="Q9BZR6">
    <property type="expression patterns" value="baseline and differential"/>
</dbReference>
<dbReference type="GO" id="GO:0044295">
    <property type="term" value="C:axonal growth cone"/>
    <property type="evidence" value="ECO:0000250"/>
    <property type="project" value="UniProtKB"/>
</dbReference>
<dbReference type="GO" id="GO:0009986">
    <property type="term" value="C:cell surface"/>
    <property type="evidence" value="ECO:0000314"/>
    <property type="project" value="UniProtKB"/>
</dbReference>
<dbReference type="GO" id="GO:0043198">
    <property type="term" value="C:dendritic shaft"/>
    <property type="evidence" value="ECO:0000250"/>
    <property type="project" value="UniProtKB"/>
</dbReference>
<dbReference type="GO" id="GO:0005783">
    <property type="term" value="C:endoplasmic reticulum"/>
    <property type="evidence" value="ECO:0000314"/>
    <property type="project" value="LIFEdb"/>
</dbReference>
<dbReference type="GO" id="GO:0009897">
    <property type="term" value="C:external side of plasma membrane"/>
    <property type="evidence" value="ECO:0000315"/>
    <property type="project" value="UniProtKB"/>
</dbReference>
<dbReference type="GO" id="GO:0070062">
    <property type="term" value="C:extracellular exosome"/>
    <property type="evidence" value="ECO:0007005"/>
    <property type="project" value="UniProtKB"/>
</dbReference>
<dbReference type="GO" id="GO:0098978">
    <property type="term" value="C:glutamatergic synapse"/>
    <property type="evidence" value="ECO:0007669"/>
    <property type="project" value="Ensembl"/>
</dbReference>
<dbReference type="GO" id="GO:0045121">
    <property type="term" value="C:membrane raft"/>
    <property type="evidence" value="ECO:0000250"/>
    <property type="project" value="UniProtKB"/>
</dbReference>
<dbReference type="GO" id="GO:0043005">
    <property type="term" value="C:neuron projection"/>
    <property type="evidence" value="ECO:0000250"/>
    <property type="project" value="UniProtKB"/>
</dbReference>
<dbReference type="GO" id="GO:0043025">
    <property type="term" value="C:neuronal cell body"/>
    <property type="evidence" value="ECO:0000250"/>
    <property type="project" value="UniProtKB"/>
</dbReference>
<dbReference type="GO" id="GO:0043204">
    <property type="term" value="C:perikaryon"/>
    <property type="evidence" value="ECO:0007669"/>
    <property type="project" value="UniProtKB-SubCell"/>
</dbReference>
<dbReference type="GO" id="GO:0005886">
    <property type="term" value="C:plasma membrane"/>
    <property type="evidence" value="ECO:0000250"/>
    <property type="project" value="UniProtKB"/>
</dbReference>
<dbReference type="GO" id="GO:0035374">
    <property type="term" value="F:chondroitin sulfate binding"/>
    <property type="evidence" value="ECO:0000250"/>
    <property type="project" value="UniProtKB"/>
</dbReference>
<dbReference type="GO" id="GO:1905573">
    <property type="term" value="F:ganglioside GM1 binding"/>
    <property type="evidence" value="ECO:0000314"/>
    <property type="project" value="UniProtKB"/>
</dbReference>
<dbReference type="GO" id="GO:1905576">
    <property type="term" value="F:ganglioside GT1b binding"/>
    <property type="evidence" value="ECO:0000314"/>
    <property type="project" value="UniProtKB"/>
</dbReference>
<dbReference type="GO" id="GO:0008201">
    <property type="term" value="F:heparin binding"/>
    <property type="evidence" value="ECO:0000250"/>
    <property type="project" value="UniProtKB"/>
</dbReference>
<dbReference type="GO" id="GO:0038131">
    <property type="term" value="F:neuregulin receptor activity"/>
    <property type="evidence" value="ECO:0000250"/>
    <property type="project" value="UniProtKB"/>
</dbReference>
<dbReference type="GO" id="GO:0038023">
    <property type="term" value="F:signaling receptor activity"/>
    <property type="evidence" value="ECO:0000250"/>
    <property type="project" value="UniProtKB"/>
</dbReference>
<dbReference type="GO" id="GO:0007409">
    <property type="term" value="P:axonogenesis"/>
    <property type="evidence" value="ECO:0007669"/>
    <property type="project" value="Ensembl"/>
</dbReference>
<dbReference type="GO" id="GO:0007166">
    <property type="term" value="P:cell surface receptor signaling pathway"/>
    <property type="evidence" value="ECO:0000250"/>
    <property type="project" value="UniProtKB"/>
</dbReference>
<dbReference type="GO" id="GO:0022038">
    <property type="term" value="P:corpus callosum development"/>
    <property type="evidence" value="ECO:0000250"/>
    <property type="project" value="UniProtKB"/>
</dbReference>
<dbReference type="GO" id="GO:0030517">
    <property type="term" value="P:negative regulation of axon extension"/>
    <property type="evidence" value="ECO:0000250"/>
    <property type="project" value="UniProtKB"/>
</dbReference>
<dbReference type="GO" id="GO:0048681">
    <property type="term" value="P:negative regulation of axon regeneration"/>
    <property type="evidence" value="ECO:0000250"/>
    <property type="project" value="UniProtKB"/>
</dbReference>
<dbReference type="GO" id="GO:0010977">
    <property type="term" value="P:negative regulation of neuron projection development"/>
    <property type="evidence" value="ECO:0000250"/>
    <property type="project" value="UniProtKB"/>
</dbReference>
<dbReference type="GO" id="GO:0023041">
    <property type="term" value="P:neuronal signal transduction"/>
    <property type="evidence" value="ECO:0000250"/>
    <property type="project" value="UniProtKB"/>
</dbReference>
<dbReference type="GO" id="GO:0043547">
    <property type="term" value="P:positive regulation of GTPase activity"/>
    <property type="evidence" value="ECO:0000250"/>
    <property type="project" value="UniProtKB"/>
</dbReference>
<dbReference type="GO" id="GO:0035025">
    <property type="term" value="P:positive regulation of Rho protein signal transduction"/>
    <property type="evidence" value="ECO:0000315"/>
    <property type="project" value="UniProtKB"/>
</dbReference>
<dbReference type="GO" id="GO:0150052">
    <property type="term" value="P:regulation of postsynapse assembly"/>
    <property type="evidence" value="ECO:0007669"/>
    <property type="project" value="Ensembl"/>
</dbReference>
<dbReference type="FunFam" id="3.80.10.10:FF:000018">
    <property type="entry name" value="Reticulon 4 receptor"/>
    <property type="match status" value="1"/>
</dbReference>
<dbReference type="Gene3D" id="3.80.10.10">
    <property type="entry name" value="Ribonuclease Inhibitor"/>
    <property type="match status" value="1"/>
</dbReference>
<dbReference type="InterPro" id="IPR000483">
    <property type="entry name" value="Cys-rich_flank_reg_C"/>
</dbReference>
<dbReference type="InterPro" id="IPR001611">
    <property type="entry name" value="Leu-rich_rpt"/>
</dbReference>
<dbReference type="InterPro" id="IPR003591">
    <property type="entry name" value="Leu-rich_rpt_typical-subtyp"/>
</dbReference>
<dbReference type="InterPro" id="IPR032675">
    <property type="entry name" value="LRR_dom_sf"/>
</dbReference>
<dbReference type="InterPro" id="IPR050541">
    <property type="entry name" value="LRR_TM_domain-containing"/>
</dbReference>
<dbReference type="PANTHER" id="PTHR24369">
    <property type="entry name" value="ANTIGEN BSP, PUTATIVE-RELATED"/>
    <property type="match status" value="1"/>
</dbReference>
<dbReference type="PANTHER" id="PTHR24369:SF174">
    <property type="entry name" value="RETICULON-4 RECEPTOR"/>
    <property type="match status" value="1"/>
</dbReference>
<dbReference type="Pfam" id="PF13855">
    <property type="entry name" value="LRR_8"/>
    <property type="match status" value="2"/>
</dbReference>
<dbReference type="SMART" id="SM00369">
    <property type="entry name" value="LRR_TYP"/>
    <property type="match status" value="8"/>
</dbReference>
<dbReference type="SMART" id="SM00082">
    <property type="entry name" value="LRRCT"/>
    <property type="match status" value="1"/>
</dbReference>
<dbReference type="SUPFAM" id="SSF52058">
    <property type="entry name" value="L domain-like"/>
    <property type="match status" value="1"/>
</dbReference>
<dbReference type="PROSITE" id="PS51450">
    <property type="entry name" value="LRR"/>
    <property type="match status" value="6"/>
</dbReference>
<reference key="1">
    <citation type="journal article" date="2001" name="Nature">
        <title>Identification of a receptor mediating Nogo-66 inhibition of axonal regeneration.</title>
        <authorList>
            <person name="Fournier A.E."/>
            <person name="GrandPre T."/>
            <person name="Strittmatter S.M."/>
        </authorList>
    </citation>
    <scope>NUCLEOTIDE SEQUENCE [MRNA]</scope>
    <source>
        <tissue>Brain</tissue>
    </source>
</reference>
<reference key="2">
    <citation type="journal article" date="2007" name="BMC Genomics">
        <title>The full-ORF clone resource of the German cDNA consortium.</title>
        <authorList>
            <person name="Bechtel S."/>
            <person name="Rosenfelder H."/>
            <person name="Duda A."/>
            <person name="Schmidt C.P."/>
            <person name="Ernst U."/>
            <person name="Wellenreuther R."/>
            <person name="Mehrle A."/>
            <person name="Schuster C."/>
            <person name="Bahr A."/>
            <person name="Bloecker H."/>
            <person name="Heubner D."/>
            <person name="Hoerlein A."/>
            <person name="Michel G."/>
            <person name="Wedler H."/>
            <person name="Koehrer K."/>
            <person name="Ottenwaelder B."/>
            <person name="Poustka A."/>
            <person name="Wiemann S."/>
            <person name="Schupp I."/>
        </authorList>
    </citation>
    <scope>NUCLEOTIDE SEQUENCE [LARGE SCALE MRNA]</scope>
    <source>
        <tissue>Brain</tissue>
    </source>
</reference>
<reference key="3">
    <citation type="journal article" date="2003" name="Genome Res.">
        <title>The secreted protein discovery initiative (SPDI), a large-scale effort to identify novel human secreted and transmembrane proteins: a bioinformatics assessment.</title>
        <authorList>
            <person name="Clark H.F."/>
            <person name="Gurney A.L."/>
            <person name="Abaya E."/>
            <person name="Baker K."/>
            <person name="Baldwin D.T."/>
            <person name="Brush J."/>
            <person name="Chen J."/>
            <person name="Chow B."/>
            <person name="Chui C."/>
            <person name="Crowley C."/>
            <person name="Currell B."/>
            <person name="Deuel B."/>
            <person name="Dowd P."/>
            <person name="Eaton D."/>
            <person name="Foster J.S."/>
            <person name="Grimaldi C."/>
            <person name="Gu Q."/>
            <person name="Hass P.E."/>
            <person name="Heldens S."/>
            <person name="Huang A."/>
            <person name="Kim H.S."/>
            <person name="Klimowski L."/>
            <person name="Jin Y."/>
            <person name="Johnson S."/>
            <person name="Lee J."/>
            <person name="Lewis L."/>
            <person name="Liao D."/>
            <person name="Mark M.R."/>
            <person name="Robbie E."/>
            <person name="Sanchez C."/>
            <person name="Schoenfeld J."/>
            <person name="Seshagiri S."/>
            <person name="Simmons L."/>
            <person name="Singh J."/>
            <person name="Smith V."/>
            <person name="Stinson J."/>
            <person name="Vagts A."/>
            <person name="Vandlen R.L."/>
            <person name="Watanabe C."/>
            <person name="Wieand D."/>
            <person name="Woods K."/>
            <person name="Xie M.-H."/>
            <person name="Yansura D.G."/>
            <person name="Yi S."/>
            <person name="Yu G."/>
            <person name="Yuan J."/>
            <person name="Zhang M."/>
            <person name="Zhang Z."/>
            <person name="Goddard A.D."/>
            <person name="Wood W.I."/>
            <person name="Godowski P.J."/>
            <person name="Gray A.M."/>
        </authorList>
    </citation>
    <scope>NUCLEOTIDE SEQUENCE [LARGE SCALE MRNA]</scope>
</reference>
<reference key="4">
    <citation type="journal article" date="2004" name="Genome Biol.">
        <title>A genome annotation-driven approach to cloning the human ORFeome.</title>
        <authorList>
            <person name="Collins J.E."/>
            <person name="Wright C.L."/>
            <person name="Edwards C.A."/>
            <person name="Davis M.P."/>
            <person name="Grinham J.A."/>
            <person name="Cole C.G."/>
            <person name="Goward M.E."/>
            <person name="Aguado B."/>
            <person name="Mallya M."/>
            <person name="Mokrab Y."/>
            <person name="Huckle E.J."/>
            <person name="Beare D.M."/>
            <person name="Dunham I."/>
        </authorList>
    </citation>
    <scope>NUCLEOTIDE SEQUENCE [LARGE SCALE MRNA]</scope>
</reference>
<reference key="5">
    <citation type="journal article" date="1999" name="Nature">
        <title>The DNA sequence of human chromosome 22.</title>
        <authorList>
            <person name="Dunham I."/>
            <person name="Hunt A.R."/>
            <person name="Collins J.E."/>
            <person name="Bruskiewich R."/>
            <person name="Beare D.M."/>
            <person name="Clamp M."/>
            <person name="Smink L.J."/>
            <person name="Ainscough R."/>
            <person name="Almeida J.P."/>
            <person name="Babbage A.K."/>
            <person name="Bagguley C."/>
            <person name="Bailey J."/>
            <person name="Barlow K.F."/>
            <person name="Bates K.N."/>
            <person name="Beasley O.P."/>
            <person name="Bird C.P."/>
            <person name="Blakey S.E."/>
            <person name="Bridgeman A.M."/>
            <person name="Buck D."/>
            <person name="Burgess J."/>
            <person name="Burrill W.D."/>
            <person name="Burton J."/>
            <person name="Carder C."/>
            <person name="Carter N.P."/>
            <person name="Chen Y."/>
            <person name="Clark G."/>
            <person name="Clegg S.M."/>
            <person name="Cobley V.E."/>
            <person name="Cole C.G."/>
            <person name="Collier R.E."/>
            <person name="Connor R."/>
            <person name="Conroy D."/>
            <person name="Corby N.R."/>
            <person name="Coville G.J."/>
            <person name="Cox A.V."/>
            <person name="Davis J."/>
            <person name="Dawson E."/>
            <person name="Dhami P.D."/>
            <person name="Dockree C."/>
            <person name="Dodsworth S.J."/>
            <person name="Durbin R.M."/>
            <person name="Ellington A.G."/>
            <person name="Evans K.L."/>
            <person name="Fey J.M."/>
            <person name="Fleming K."/>
            <person name="French L."/>
            <person name="Garner A.A."/>
            <person name="Gilbert J.G.R."/>
            <person name="Goward M.E."/>
            <person name="Grafham D.V."/>
            <person name="Griffiths M.N.D."/>
            <person name="Hall C."/>
            <person name="Hall R.E."/>
            <person name="Hall-Tamlyn G."/>
            <person name="Heathcott R.W."/>
            <person name="Ho S."/>
            <person name="Holmes S."/>
            <person name="Hunt S.E."/>
            <person name="Jones M.C."/>
            <person name="Kershaw J."/>
            <person name="Kimberley A.M."/>
            <person name="King A."/>
            <person name="Laird G.K."/>
            <person name="Langford C.F."/>
            <person name="Leversha M.A."/>
            <person name="Lloyd C."/>
            <person name="Lloyd D.M."/>
            <person name="Martyn I.D."/>
            <person name="Mashreghi-Mohammadi M."/>
            <person name="Matthews L.H."/>
            <person name="Mccann O.T."/>
            <person name="Mcclay J."/>
            <person name="Mclaren S."/>
            <person name="McMurray A.A."/>
            <person name="Milne S.A."/>
            <person name="Mortimore B.J."/>
            <person name="Odell C.N."/>
            <person name="Pavitt R."/>
            <person name="Pearce A.V."/>
            <person name="Pearson D."/>
            <person name="Phillimore B.J.C.T."/>
            <person name="Phillips S.H."/>
            <person name="Plumb R.W."/>
            <person name="Ramsay H."/>
            <person name="Ramsey Y."/>
            <person name="Rogers L."/>
            <person name="Ross M.T."/>
            <person name="Scott C.E."/>
            <person name="Sehra H.K."/>
            <person name="Skuce C.D."/>
            <person name="Smalley S."/>
            <person name="Smith M.L."/>
            <person name="Soderlund C."/>
            <person name="Spragon L."/>
            <person name="Steward C.A."/>
            <person name="Sulston J.E."/>
            <person name="Swann R.M."/>
            <person name="Vaudin M."/>
            <person name="Wall M."/>
            <person name="Wallis J.M."/>
            <person name="Whiteley M.N."/>
            <person name="Willey D.L."/>
            <person name="Williams L."/>
            <person name="Williams S.A."/>
            <person name="Williamson H."/>
            <person name="Wilmer T.E."/>
            <person name="Wilming L."/>
            <person name="Wright C.L."/>
            <person name="Hubbard T."/>
            <person name="Bentley D.R."/>
            <person name="Beck S."/>
            <person name="Rogers J."/>
            <person name="Shimizu N."/>
            <person name="Minoshima S."/>
            <person name="Kawasaki K."/>
            <person name="Sasaki T."/>
            <person name="Asakawa S."/>
            <person name="Kudoh J."/>
            <person name="Shintani A."/>
            <person name="Shibuya K."/>
            <person name="Yoshizaki Y."/>
            <person name="Aoki N."/>
            <person name="Mitsuyama S."/>
            <person name="Roe B.A."/>
            <person name="Chen F."/>
            <person name="Chu L."/>
            <person name="Crabtree J."/>
            <person name="Deschamps S."/>
            <person name="Do A."/>
            <person name="Do T."/>
            <person name="Dorman A."/>
            <person name="Fang F."/>
            <person name="Fu Y."/>
            <person name="Hu P."/>
            <person name="Hua A."/>
            <person name="Kenton S."/>
            <person name="Lai H."/>
            <person name="Lao H.I."/>
            <person name="Lewis J."/>
            <person name="Lewis S."/>
            <person name="Lin S.-P."/>
            <person name="Loh P."/>
            <person name="Malaj E."/>
            <person name="Nguyen T."/>
            <person name="Pan H."/>
            <person name="Phan S."/>
            <person name="Qi S."/>
            <person name="Qian Y."/>
            <person name="Ray L."/>
            <person name="Ren Q."/>
            <person name="Shaull S."/>
            <person name="Sloan D."/>
            <person name="Song L."/>
            <person name="Wang Q."/>
            <person name="Wang Y."/>
            <person name="Wang Z."/>
            <person name="White J."/>
            <person name="Willingham D."/>
            <person name="Wu H."/>
            <person name="Yao Z."/>
            <person name="Zhan M."/>
            <person name="Zhang G."/>
            <person name="Chissoe S."/>
            <person name="Murray J."/>
            <person name="Miller N."/>
            <person name="Minx P."/>
            <person name="Fulton R."/>
            <person name="Johnson D."/>
            <person name="Bemis G."/>
            <person name="Bentley D."/>
            <person name="Bradshaw H."/>
            <person name="Bourne S."/>
            <person name="Cordes M."/>
            <person name="Du Z."/>
            <person name="Fulton L."/>
            <person name="Goela D."/>
            <person name="Graves T."/>
            <person name="Hawkins J."/>
            <person name="Hinds K."/>
            <person name="Kemp K."/>
            <person name="Latreille P."/>
            <person name="Layman D."/>
            <person name="Ozersky P."/>
            <person name="Rohlfing T."/>
            <person name="Scheet P."/>
            <person name="Walker C."/>
            <person name="Wamsley A."/>
            <person name="Wohldmann P."/>
            <person name="Pepin K."/>
            <person name="Nelson J."/>
            <person name="Korf I."/>
            <person name="Bedell J.A."/>
            <person name="Hillier L.W."/>
            <person name="Mardis E."/>
            <person name="Waterston R."/>
            <person name="Wilson R."/>
            <person name="Emanuel B.S."/>
            <person name="Shaikh T."/>
            <person name="Kurahashi H."/>
            <person name="Saitta S."/>
            <person name="Budarf M.L."/>
            <person name="McDermid H.E."/>
            <person name="Johnson A."/>
            <person name="Wong A.C.C."/>
            <person name="Morrow B.E."/>
            <person name="Edelmann L."/>
            <person name="Kim U.J."/>
            <person name="Shizuya H."/>
            <person name="Simon M.I."/>
            <person name="Dumanski J.P."/>
            <person name="Peyrard M."/>
            <person name="Kedra D."/>
            <person name="Seroussi E."/>
            <person name="Fransson I."/>
            <person name="Tapia I."/>
            <person name="Bruder C.E."/>
            <person name="O'Brien K.P."/>
            <person name="Wilkinson P."/>
            <person name="Bodenteich A."/>
            <person name="Hartman K."/>
            <person name="Hu X."/>
            <person name="Khan A.S."/>
            <person name="Lane L."/>
            <person name="Tilahun Y."/>
            <person name="Wright H."/>
        </authorList>
    </citation>
    <scope>NUCLEOTIDE SEQUENCE [LARGE SCALE GENOMIC DNA]</scope>
</reference>
<reference key="6">
    <citation type="submission" date="2005-09" db="EMBL/GenBank/DDBJ databases">
        <authorList>
            <person name="Mural R.J."/>
            <person name="Istrail S."/>
            <person name="Sutton G.G."/>
            <person name="Florea L."/>
            <person name="Halpern A.L."/>
            <person name="Mobarry C.M."/>
            <person name="Lippert R."/>
            <person name="Walenz B."/>
            <person name="Shatkay H."/>
            <person name="Dew I."/>
            <person name="Miller J.R."/>
            <person name="Flanigan M.J."/>
            <person name="Edwards N.J."/>
            <person name="Bolanos R."/>
            <person name="Fasulo D."/>
            <person name="Halldorsson B.V."/>
            <person name="Hannenhalli S."/>
            <person name="Turner R."/>
            <person name="Yooseph S."/>
            <person name="Lu F."/>
            <person name="Nusskern D.R."/>
            <person name="Shue B.C."/>
            <person name="Zheng X.H."/>
            <person name="Zhong F."/>
            <person name="Delcher A.L."/>
            <person name="Huson D.H."/>
            <person name="Kravitz S.A."/>
            <person name="Mouchard L."/>
            <person name="Reinert K."/>
            <person name="Remington K.A."/>
            <person name="Clark A.G."/>
            <person name="Waterman M.S."/>
            <person name="Eichler E.E."/>
            <person name="Adams M.D."/>
            <person name="Hunkapiller M.W."/>
            <person name="Myers E.W."/>
            <person name="Venter J.C."/>
        </authorList>
    </citation>
    <scope>NUCLEOTIDE SEQUENCE [LARGE SCALE GENOMIC DNA]</scope>
</reference>
<reference key="7">
    <citation type="journal article" date="2004" name="Genome Res.">
        <title>The status, quality, and expansion of the NIH full-length cDNA project: the Mammalian Gene Collection (MGC).</title>
        <authorList>
            <consortium name="The MGC Project Team"/>
        </authorList>
    </citation>
    <scope>NUCLEOTIDE SEQUENCE [LARGE SCALE MRNA]</scope>
    <source>
        <tissue>Lung</tissue>
    </source>
</reference>
<reference key="8">
    <citation type="journal article" date="2004" name="Protein Sci.">
        <title>Signal peptide prediction based on analysis of experimentally verified cleavage sites.</title>
        <authorList>
            <person name="Zhang Z."/>
            <person name="Henzel W.J."/>
        </authorList>
    </citation>
    <scope>PROTEIN SEQUENCE OF 27-41</scope>
</reference>
<reference key="9">
    <citation type="journal article" date="2002" name="Nat. Neurosci.">
        <title>A p75(NTR) and Nogo receptor complex mediates repulsive signaling by myelin-associated glycoprotein.</title>
        <authorList>
            <person name="Wong S.T."/>
            <person name="Henley J.R."/>
            <person name="Kanning K.C."/>
            <person name="Huang K.H."/>
            <person name="Bothwell M."/>
            <person name="Poo M.M."/>
        </authorList>
    </citation>
    <scope>FUNCTION</scope>
    <scope>INTERACTION WITH NGR</scope>
    <scope>SUBCELLULAR LOCATION</scope>
</reference>
<reference key="10">
    <citation type="journal article" date="2002" name="Nature">
        <title>Nogo-66 receptor antagonist peptide promotes axonal regeneration.</title>
        <authorList>
            <person name="GrandPre T."/>
            <person name="Li S."/>
            <person name="Strittmatter S.M."/>
        </authorList>
    </citation>
    <scope>FUNCTION</scope>
    <scope>INTERACTION WITH RTN4</scope>
</reference>
<reference key="11">
    <citation type="journal article" date="2002" name="Nature">
        <title>Oligodendrocyte-myelin glycoprotein is a Nogo receptor ligand that inhibits neurite outgrowth.</title>
        <authorList>
            <person name="Wang K.C."/>
            <person name="Koprivica V."/>
            <person name="Kim J.A."/>
            <person name="Sivasankaran R."/>
            <person name="Guo Y."/>
            <person name="Neve R.L."/>
            <person name="He Z."/>
        </authorList>
    </citation>
    <scope>INTERACTION WITH OMG</scope>
    <scope>FUNCTION</scope>
</reference>
<reference key="12">
    <citation type="journal article" date="2002" name="Science">
        <title>Myelin-associated glycoprotein as a functional ligand for the Nogo-66 receptor.</title>
        <authorList>
            <person name="Liu B.P."/>
            <person name="Fournier A."/>
            <person name="GrandPre T."/>
            <person name="Strittmatter S.M."/>
        </authorList>
    </citation>
    <scope>INTERACTION WITH MAG</scope>
    <scope>FUNCTION</scope>
</reference>
<reference key="13">
    <citation type="journal article" date="2003" name="J. Neurochem.">
        <title>Characterization of two novel proteins, NgRH1 and NgRH2, structurally and biochemically homologous to the Nogo-66 receptor.</title>
        <authorList>
            <person name="Pignot V."/>
            <person name="Hein A.E."/>
            <person name="Barske C."/>
            <person name="Wiessner C."/>
            <person name="Walmsley A.R."/>
            <person name="Kaupmann K."/>
            <person name="Mayeur H."/>
            <person name="Sommer B."/>
            <person name="Mir A.K."/>
            <person name="Frentzel S."/>
        </authorList>
    </citation>
    <scope>SUBCELLULAR LOCATION</scope>
    <scope>TISSUE SPECIFICITY</scope>
</reference>
<reference key="14">
    <citation type="journal article" date="2004" name="Hum. Mutat.">
        <title>Mutations of the Nogo-66 receptor (RTN4R) gene in schizophrenia.</title>
        <authorList>
            <person name="Sinibaldi L."/>
            <person name="De Luca A."/>
            <person name="Bellacchio E."/>
            <person name="Conti E."/>
            <person name="Pasini A."/>
            <person name="Paloscia C."/>
            <person name="Spalletta G."/>
            <person name="Caltagirone C."/>
            <person name="Pizzuti A."/>
            <person name="Dallapiccola B."/>
        </authorList>
    </citation>
    <scope>INVOLVEMENT IN SCZD</scope>
    <scope>VARIANTS SCZD TRP-119 AND HIS-196</scope>
</reference>
<reference key="15">
    <citation type="journal article" date="2004" name="Nat. Neurosci.">
        <title>LINGO-1 is a component of the Nogo-66 receptor/p75 signaling complex.</title>
        <authorList>
            <person name="Mi S."/>
            <person name="Lee X."/>
            <person name="Shao Z."/>
            <person name="Thill G."/>
            <person name="Ji B."/>
            <person name="Relton J."/>
            <person name="Levesque M."/>
            <person name="Allaire N."/>
            <person name="Perrin S."/>
            <person name="Sands B."/>
            <person name="Crowell T."/>
            <person name="Cate R.L."/>
            <person name="McCoy J.M."/>
            <person name="Pepinsky R.B."/>
        </authorList>
    </citation>
    <scope>FUNCTION</scope>
    <scope>INTERACTION WITH LINGO1</scope>
</reference>
<reference key="16">
    <citation type="journal article" date="2002" name="Science">
        <title>It takes more than two to Nogo.</title>
        <authorList>
            <person name="Woolf C.J."/>
            <person name="Bloechlinger S."/>
        </authorList>
    </citation>
    <scope>REVIEW</scope>
</reference>
<reference key="17">
    <citation type="journal article" date="2002" name="J. Neurosci. Res.">
        <title>Nogos and the Nogo-66 receptor: factors inhibiting CNS neuron regeneration.</title>
        <authorList>
            <person name="Ng C.E.L."/>
            <person name="Tang B.L."/>
        </authorList>
    </citation>
    <scope>REVIEW</scope>
</reference>
<reference key="18">
    <citation type="journal article" date="2006" name="Assay Drug Dev. Technol.">
        <title>A high-content screening assay for the Nogo receptor based on cellular Rho activation.</title>
        <authorList>
            <person name="Teusch N."/>
            <person name="Kiefer C."/>
        </authorList>
    </citation>
    <scope>FUNCTION</scope>
    <scope>SUBCELLULAR LOCATION</scope>
</reference>
<reference key="19">
    <citation type="journal article" date="2008" name="J. Biol. Chem.">
        <title>Ganglioside inhibition of neurite outgrowth requires Nogo receptor function: identification of interaction sites and development of novel antagonists.</title>
        <authorList>
            <person name="Williams G."/>
            <person name="Wood A."/>
            <person name="Williams E.J."/>
            <person name="Gao Y."/>
            <person name="Mercado M.L."/>
            <person name="Katz A."/>
            <person name="Joseph-McCarthy D."/>
            <person name="Bates B."/>
            <person name="Ling H.P."/>
            <person name="Aulabaugh A."/>
            <person name="Zaccardi J."/>
            <person name="Xie Y."/>
            <person name="Pangalos M.N."/>
            <person name="Walsh F.S."/>
            <person name="Doherty P."/>
        </authorList>
    </citation>
    <scope>INTERACTION WITH GANGLIOSIDE GT1B; GANGLIOSIDE GM1; NGFR; RTN4 AND MAG</scope>
    <scope>SUBUNIT</scope>
    <scope>SUBCELLULAR LOCATION</scope>
    <scope>FUNCTION</scope>
    <scope>MUTAGENESIS OF ARG-151; ARG-199; LYS-277 AND ARG-279</scope>
</reference>
<reference key="20">
    <citation type="journal article" date="2008" name="J. Neurosci.">
        <title>Genetic variants of Nogo-66 receptor with possible association to schizophrenia block myelin inhibition of axon growth.</title>
        <authorList>
            <person name="Budel S."/>
            <person name="Padukkavidana T."/>
            <person name="Liu B.P."/>
            <person name="Feng Z."/>
            <person name="Hu F."/>
            <person name="Johnson S."/>
            <person name="Lauren J."/>
            <person name="Park J.H."/>
            <person name="McGee A.W."/>
            <person name="Liao J."/>
            <person name="Stillman A."/>
            <person name="Kim J.E."/>
            <person name="Yang B.Z."/>
            <person name="Sodi S."/>
            <person name="Gelernter J."/>
            <person name="Zhao H."/>
            <person name="Hisama F."/>
            <person name="Arnsten A.F."/>
            <person name="Strittmatter S.M."/>
        </authorList>
    </citation>
    <scope>FUNCTION</scope>
    <scope>INTERACTION WITH MAG; RTN4; OMG; NGFR AND LINGO1</scope>
    <scope>INVOLVEMENT IN SCZD</scope>
    <scope>VARIANTS MET-53; HIS-68; SER-141; HIS-227; MET-263; SER-314; LEU-329 AND MET-363</scope>
    <scope>VARIANTS SCZD TRP-119; HIS-196; CYS-227; GLN-377; TRP-377 AND TRP-399</scope>
    <scope>CHARACTERIZATION OF VARIANTS SCZD TRP-119; HIS-196; GLN-377 AND TRP-377</scope>
</reference>
<reference key="21">
    <citation type="journal article" date="2011" name="Cell. Mol. Neurobiol.">
        <title>Dyslexia-associated kiaa0319-like protein interacts with axon guidance receptor nogo receptor 1.</title>
        <authorList>
            <person name="Poon M.W."/>
            <person name="Tsang W.H."/>
            <person name="Chan S.O."/>
            <person name="Li H.M."/>
            <person name="Ng H.K."/>
            <person name="Waye M.M."/>
        </authorList>
    </citation>
    <scope>INTERACTION WITH KIAA0319L</scope>
</reference>
<reference key="22">
    <citation type="journal article" date="2012" name="Neuron">
        <title>The Nogo receptor family restricts synapse number in the developing hippocampus.</title>
        <authorList>
            <person name="Wills Z.P."/>
            <person name="Mandel-Brehm C."/>
            <person name="Mardinly A.R."/>
            <person name="McCord A.E."/>
            <person name="Giger R.J."/>
            <person name="Greenberg M.E."/>
        </authorList>
    </citation>
    <scope>FUNCTION</scope>
</reference>
<reference key="23">
    <citation type="journal article" date="2017" name="Transl. Psychiatry">
        <title>A novel rare variant R292H in RTN4R affects growth cone formation and possibly contributes to schizophrenia susceptibility.</title>
        <authorList>
            <person name="Kimura H."/>
            <person name="Fujita Y."/>
            <person name="Kawabata T."/>
            <person name="Ishizuka K."/>
            <person name="Wang C."/>
            <person name="Iwayama Y."/>
            <person name="Okahisa Y."/>
            <person name="Kushima I."/>
            <person name="Morikawa M."/>
            <person name="Uno Y."/>
            <person name="Okada T."/>
            <person name="Ikeda M."/>
            <person name="Inada T."/>
            <person name="Branko A."/>
            <person name="Mori D."/>
            <person name="Yoshikawa T."/>
            <person name="Iwata N."/>
            <person name="Nakamura H."/>
            <person name="Yamashita T."/>
            <person name="Ozaki N."/>
        </authorList>
    </citation>
    <scope>FUNCTION</scope>
    <scope>VARIANTS HIS-68; ASN-259 AND MET-363</scope>
    <scope>INVOLVEMENT IN SCZD</scope>
    <scope>VARIANT SCZD HIS-292</scope>
    <scope>CHARACTERIZATION OF VARIANT SCZD HIS-292</scope>
</reference>
<reference key="24">
    <citation type="journal article" date="2003" name="EMBO J.">
        <title>Structure and axon outgrowth inhibitor binding of the Nogo-66 receptor and related proteins.</title>
        <authorList>
            <person name="Barton W.A."/>
            <person name="Liu B.P."/>
            <person name="Tzvetkova D."/>
            <person name="Jeffrey P.D."/>
            <person name="Fournier A.E."/>
            <person name="Sah D."/>
            <person name="Cate R."/>
            <person name="Strittmatter S.M."/>
            <person name="Nikolov D.B."/>
        </authorList>
    </citation>
    <scope>X-RAY CRYSTALLOGRAPHY (3.2 ANGSTROMS) OF 27-311</scope>
    <scope>FUNCTION</scope>
    <scope>INTERACTION WITH MAG; OMG AND RTN4</scope>
    <scope>SUBCELLULAR LOCATION</scope>
    <scope>DISULFIDE BONDS</scope>
    <scope>GLYCOSYLATION AT ASN-82 AND ASN-179</scope>
</reference>
<reference key="25">
    <citation type="journal article" date="2003" name="Neuron">
        <title>Structure of the Nogo receptor ectodomain: a recognition module implicated in myelin inhibition.</title>
        <authorList>
            <person name="He X.L."/>
            <person name="Bazan J.F."/>
            <person name="McDermott G."/>
            <person name="Park J.B."/>
            <person name="Wang K."/>
            <person name="Tessier-Lavigne M."/>
            <person name="He Z."/>
            <person name="Garcia K.C."/>
        </authorList>
    </citation>
    <scope>X-RAY CRYSTALLOGRAPHY (1.52 ANGSTROMS) OF 26-310</scope>
    <scope>DISULFIDE BONDS</scope>
    <scope>GLYCOSYLATION AT ASN-82 AND ASN-179</scope>
</reference>
<evidence type="ECO:0000250" key="1">
    <source>
        <dbReference type="UniProtKB" id="Q99M75"/>
    </source>
</evidence>
<evidence type="ECO:0000250" key="2">
    <source>
        <dbReference type="UniProtKB" id="Q99PI8"/>
    </source>
</evidence>
<evidence type="ECO:0000255" key="3"/>
<evidence type="ECO:0000256" key="4">
    <source>
        <dbReference type="SAM" id="MobiDB-lite"/>
    </source>
</evidence>
<evidence type="ECO:0000269" key="5">
    <source>
    </source>
</evidence>
<evidence type="ECO:0000269" key="6">
    <source>
    </source>
</evidence>
<evidence type="ECO:0000269" key="7">
    <source>
    </source>
</evidence>
<evidence type="ECO:0000269" key="8">
    <source>
    </source>
</evidence>
<evidence type="ECO:0000269" key="9">
    <source>
    </source>
</evidence>
<evidence type="ECO:0000269" key="10">
    <source>
    </source>
</evidence>
<evidence type="ECO:0000269" key="11">
    <source>
    </source>
</evidence>
<evidence type="ECO:0000269" key="12">
    <source>
    </source>
</evidence>
<evidence type="ECO:0000269" key="13">
    <source>
    </source>
</evidence>
<evidence type="ECO:0000269" key="14">
    <source>
    </source>
</evidence>
<evidence type="ECO:0000269" key="15">
    <source>
    </source>
</evidence>
<evidence type="ECO:0000269" key="16">
    <source>
    </source>
</evidence>
<evidence type="ECO:0000269" key="17">
    <source>
    </source>
</evidence>
<evidence type="ECO:0000269" key="18">
    <source>
    </source>
</evidence>
<evidence type="ECO:0000269" key="19">
    <source>
    </source>
</evidence>
<evidence type="ECO:0000305" key="20"/>
<evidence type="ECO:0007744" key="21">
    <source>
        <dbReference type="PDB" id="1OZN"/>
    </source>
</evidence>
<evidence type="ECO:0007744" key="22">
    <source>
        <dbReference type="PDB" id="1P8T"/>
    </source>
</evidence>
<evidence type="ECO:0007829" key="23">
    <source>
        <dbReference type="PDB" id="1OZN"/>
    </source>
</evidence>
<gene>
    <name type="primary">RTN4R</name>
    <name type="synonym">NOGOR</name>
    <name type="ORF">UNQ330/PRO526</name>
</gene>
<feature type="signal peptide" evidence="13">
    <location>
        <begin position="1"/>
        <end position="26"/>
    </location>
</feature>
<feature type="chain" id="PRO_0000022253" description="Reticulon-4 receptor">
    <location>
        <begin position="27"/>
        <end position="447"/>
    </location>
</feature>
<feature type="propeptide" id="PRO_0000022254" description="Removed in mature form" evidence="3">
    <location>
        <begin position="448"/>
        <end position="473"/>
    </location>
</feature>
<feature type="domain" description="LRRNT">
    <location>
        <begin position="27"/>
        <end position="54"/>
    </location>
</feature>
<feature type="repeat" description="LRR 1" evidence="3">
    <location>
        <begin position="55"/>
        <end position="79"/>
    </location>
</feature>
<feature type="repeat" description="LRR 2" evidence="3">
    <location>
        <begin position="81"/>
        <end position="103"/>
    </location>
</feature>
<feature type="repeat" description="LRR 3" evidence="3">
    <location>
        <begin position="104"/>
        <end position="128"/>
    </location>
</feature>
<feature type="repeat" description="LRR 4" evidence="3">
    <location>
        <begin position="129"/>
        <end position="152"/>
    </location>
</feature>
<feature type="repeat" description="LRR 5" evidence="3">
    <location>
        <begin position="153"/>
        <end position="176"/>
    </location>
</feature>
<feature type="repeat" description="LRR 6" evidence="3">
    <location>
        <begin position="178"/>
        <end position="200"/>
    </location>
</feature>
<feature type="repeat" description="LRR 7" evidence="3">
    <location>
        <begin position="202"/>
        <end position="224"/>
    </location>
</feature>
<feature type="repeat" description="LRR 8" evidence="3">
    <location>
        <begin position="225"/>
        <end position="248"/>
    </location>
</feature>
<feature type="repeat" description="LRR 9" evidence="3">
    <location>
        <begin position="250"/>
        <end position="273"/>
    </location>
</feature>
<feature type="domain" description="LRRCT" evidence="3">
    <location>
        <begin position="260"/>
        <end position="310"/>
    </location>
</feature>
<feature type="region of interest" description="Disordered" evidence="4">
    <location>
        <begin position="346"/>
        <end position="447"/>
    </location>
</feature>
<feature type="compositionally biased region" description="Basic residues" evidence="4">
    <location>
        <begin position="413"/>
        <end position="429"/>
    </location>
</feature>
<feature type="compositionally biased region" description="Gly residues" evidence="4">
    <location>
        <begin position="434"/>
        <end position="445"/>
    </location>
</feature>
<feature type="lipid moiety-binding region" description="GPI-anchor amidated serine" evidence="3">
    <location>
        <position position="447"/>
    </location>
</feature>
<feature type="glycosylation site" description="N-linked (GlcNAc...) asparagine" evidence="10 11 21">
    <location>
        <position position="82"/>
    </location>
</feature>
<feature type="glycosylation site" description="N-linked (GlcNAc...) asparagine" evidence="10 11">
    <location>
        <position position="179"/>
    </location>
</feature>
<feature type="disulfide bond" evidence="10 11 21 22">
    <location>
        <begin position="27"/>
        <end position="33"/>
    </location>
</feature>
<feature type="disulfide bond" evidence="10 11 21 22">
    <location>
        <begin position="31"/>
        <end position="43"/>
    </location>
</feature>
<feature type="disulfide bond" evidence="10 11 21 22">
    <location>
        <begin position="264"/>
        <end position="287"/>
    </location>
</feature>
<feature type="disulfide bond" evidence="2">
    <location>
        <begin position="266"/>
        <end position="335"/>
    </location>
</feature>
<feature type="disulfide bond" evidence="2">
    <location>
        <begin position="309"/>
        <end position="336"/>
    </location>
</feature>
<feature type="sequence variant" id="VAR_079224" description="In dbSNP:rs145292678." evidence="17">
    <original>V</original>
    <variation>M</variation>
    <location>
        <position position="53"/>
    </location>
</feature>
<feature type="sequence variant" id="VAR_079225" description="In dbSNP:rs145773589." evidence="17 19">
    <original>R</original>
    <variation>H</variation>
    <location>
        <position position="68"/>
    </location>
</feature>
<feature type="sequence variant" id="VAR_079154" description="In SCZD; associated with disease susceptibility; unable to mediate down-regulation of axonal growth; decreased interaction with MAG and OMG; no effect on interaction with RTN4; dbSNP:rs74315508." evidence="14 17">
    <original>R</original>
    <variation>W</variation>
    <location>
        <position position="119"/>
    </location>
</feature>
<feature type="sequence variant" id="VAR_079226" description="In dbSNP:rs760855779." evidence="17">
    <original>G</original>
    <variation>S</variation>
    <location>
        <position position="141"/>
    </location>
</feature>
<feature type="sequence variant" id="VAR_079155" description="In SCZD; associated with disease susceptibility; unable to mediate down-regulation of axonal growth; does not affect interaction with MAG, RTN4 and OMG; dbSNP:rs74315509." evidence="14 17">
    <original>R</original>
    <variation>H</variation>
    <location>
        <position position="196"/>
    </location>
</feature>
<feature type="sequence variant" id="VAR_079227" description="In SCZD; uncertain significance; dbSNP:rs754793885." evidence="17">
    <original>R</original>
    <variation>C</variation>
    <location>
        <position position="227"/>
    </location>
</feature>
<feature type="sequence variant" id="VAR_079228" description="In dbSNP:rs576939822." evidence="17">
    <original>R</original>
    <variation>H</variation>
    <location>
        <position position="227"/>
    </location>
</feature>
<feature type="sequence variant" id="VAR_079229" description="In dbSNP:rs3747073." evidence="19">
    <original>D</original>
    <variation>N</variation>
    <location>
        <position position="259"/>
    </location>
</feature>
<feature type="sequence variant" id="VAR_079230" description="In dbSNP:rs752810777." evidence="17">
    <original>V</original>
    <variation>M</variation>
    <location>
        <position position="263"/>
    </location>
</feature>
<feature type="sequence variant" id="VAR_079231" description="In SCZD; associated with disease susceptibility; unable to mediate down-regulation of axonal growth; dbSNP:rs1432033565." evidence="19">
    <original>R</original>
    <variation>H</variation>
    <location>
        <position position="292"/>
    </location>
</feature>
<feature type="sequence variant" id="VAR_079232" description="In dbSNP:rs112151786." evidence="17">
    <original>G</original>
    <variation>S</variation>
    <location>
        <position position="314"/>
    </location>
</feature>
<feature type="sequence variant" id="VAR_079233" description="In dbSNP:rs757507039." evidence="17">
    <original>P</original>
    <variation>L</variation>
    <location>
        <position position="329"/>
    </location>
</feature>
<feature type="sequence variant" id="VAR_079234" description="In dbSNP:rs149231717." evidence="17 19">
    <original>V</original>
    <variation>M</variation>
    <location>
        <position position="363"/>
    </location>
</feature>
<feature type="sequence variant" id="VAR_079235" description="In SCZD; associated with disease susceptibility; unable to mediate down-regulation of axonal growth; does not affect interaction with MAG, RTN4, OMG, NGFR and LINGO1; dbSNP:rs779384862." evidence="17">
    <original>R</original>
    <variation>Q</variation>
    <location>
        <position position="377"/>
    </location>
</feature>
<feature type="sequence variant" id="VAR_079236" description="In SCZD; associated with disease susceptibility; unable to mediate down-regulation of axonal growth; does not affect interaction with MAG, RTN4, OMG, NGFR and LINGO1; dbSNP:rs748655075." evidence="17">
    <original>R</original>
    <variation>W</variation>
    <location>
        <position position="377"/>
    </location>
</feature>
<feature type="sequence variant" id="VAR_079237" description="In SCZD; uncertain significance; dbSNP:rs200119628." evidence="17">
    <original>R</original>
    <variation>W</variation>
    <location>
        <position position="399"/>
    </location>
</feature>
<feature type="mutagenesis site" description="Impaired ganglioside binding." evidence="16">
    <original>R</original>
    <variation>E</variation>
    <location>
        <position position="151"/>
    </location>
</feature>
<feature type="mutagenesis site" description="Impaired ganglioside binding." evidence="16">
    <original>R</original>
    <variation>E</variation>
    <location>
        <position position="199"/>
    </location>
</feature>
<feature type="mutagenesis site" description="No effect on interaction with MAG." evidence="16">
    <original>K</original>
    <variation>A</variation>
    <location>
        <position position="277"/>
    </location>
</feature>
<feature type="mutagenesis site" description="Decreases interaction with MAG; when associated with D-279." evidence="16">
    <original>K</original>
    <variation>D</variation>
    <location>
        <position position="277"/>
    </location>
</feature>
<feature type="mutagenesis site" description="Mildly decreases interaction with MAG." evidence="16">
    <original>R</original>
    <variation>A</variation>
    <location>
        <position position="279"/>
    </location>
</feature>
<feature type="mutagenesis site" description="Decreases interaction with MAG; when associated with D-277." evidence="16">
    <original>R</original>
    <variation>D</variation>
    <location>
        <position position="279"/>
    </location>
</feature>
<feature type="mutagenesis site" description="Impaired ganglioside binding." evidence="16">
    <original>R</original>
    <variation>E</variation>
    <location>
        <position position="279"/>
    </location>
</feature>
<feature type="strand" evidence="23">
    <location>
        <begin position="32"/>
        <end position="34"/>
    </location>
</feature>
<feature type="strand" evidence="23">
    <location>
        <begin position="36"/>
        <end position="38"/>
    </location>
</feature>
<feature type="strand" evidence="23">
    <location>
        <begin position="40"/>
        <end position="42"/>
    </location>
</feature>
<feature type="strand" evidence="23">
    <location>
        <begin position="60"/>
        <end position="63"/>
    </location>
</feature>
<feature type="turn" evidence="23">
    <location>
        <begin position="74"/>
        <end position="79"/>
    </location>
</feature>
<feature type="strand" evidence="23">
    <location>
        <begin position="85"/>
        <end position="87"/>
    </location>
</feature>
<feature type="turn" evidence="23">
    <location>
        <begin position="98"/>
        <end position="103"/>
    </location>
</feature>
<feature type="strand" evidence="23">
    <location>
        <begin position="109"/>
        <end position="111"/>
    </location>
</feature>
<feature type="turn" evidence="23">
    <location>
        <begin position="123"/>
        <end position="128"/>
    </location>
</feature>
<feature type="strand" evidence="23">
    <location>
        <begin position="134"/>
        <end position="136"/>
    </location>
</feature>
<feature type="turn" evidence="23">
    <location>
        <begin position="147"/>
        <end position="152"/>
    </location>
</feature>
<feature type="strand" evidence="23">
    <location>
        <begin position="158"/>
        <end position="160"/>
    </location>
</feature>
<feature type="turn" evidence="23">
    <location>
        <begin position="171"/>
        <end position="176"/>
    </location>
</feature>
<feature type="strand" evidence="23">
    <location>
        <begin position="182"/>
        <end position="184"/>
    </location>
</feature>
<feature type="turn" evidence="23">
    <location>
        <begin position="195"/>
        <end position="200"/>
    </location>
</feature>
<feature type="strand" evidence="23">
    <location>
        <begin position="206"/>
        <end position="208"/>
    </location>
</feature>
<feature type="turn" evidence="23">
    <location>
        <begin position="219"/>
        <end position="224"/>
    </location>
</feature>
<feature type="strand" evidence="23">
    <location>
        <begin position="230"/>
        <end position="232"/>
    </location>
</feature>
<feature type="helix" evidence="23">
    <location>
        <begin position="243"/>
        <end position="246"/>
    </location>
</feature>
<feature type="strand" evidence="23">
    <location>
        <begin position="254"/>
        <end position="256"/>
    </location>
</feature>
<feature type="helix" evidence="23">
    <location>
        <begin position="266"/>
        <end position="268"/>
    </location>
</feature>
<feature type="helix" evidence="23">
    <location>
        <begin position="269"/>
        <end position="277"/>
    </location>
</feature>
<feature type="strand" evidence="23">
    <location>
        <begin position="280"/>
        <end position="282"/>
    </location>
</feature>
<feature type="strand" evidence="23">
    <location>
        <begin position="286"/>
        <end position="290"/>
    </location>
</feature>
<feature type="helix" evidence="23">
    <location>
        <begin position="291"/>
        <end position="293"/>
    </location>
</feature>
<feature type="helix" evidence="23">
    <location>
        <begin position="298"/>
        <end position="300"/>
    </location>
</feature>
<feature type="helix" evidence="23">
    <location>
        <begin position="303"/>
        <end position="305"/>
    </location>
</feature>
<name>RTN4R_HUMAN</name>
<protein>
    <recommendedName>
        <fullName>Reticulon-4 receptor</fullName>
    </recommendedName>
    <alternativeName>
        <fullName>Nogo receptor</fullName>
        <shortName>NgR</shortName>
    </alternativeName>
    <alternativeName>
        <fullName>Nogo-66 receptor</fullName>
    </alternativeName>
</protein>
<accession>Q9BZR6</accession>
<accession>D3DX28</accession>
<keyword id="KW-0002">3D-structure</keyword>
<keyword id="KW-1003">Cell membrane</keyword>
<keyword id="KW-0966">Cell projection</keyword>
<keyword id="KW-0903">Direct protein sequencing</keyword>
<keyword id="KW-0225">Disease variant</keyword>
<keyword id="KW-1015">Disulfide bond</keyword>
<keyword id="KW-0325">Glycoprotein</keyword>
<keyword id="KW-0336">GPI-anchor</keyword>
<keyword id="KW-0433">Leucine-rich repeat</keyword>
<keyword id="KW-0446">Lipid-binding</keyword>
<keyword id="KW-0449">Lipoprotein</keyword>
<keyword id="KW-0472">Membrane</keyword>
<keyword id="KW-1267">Proteomics identification</keyword>
<keyword id="KW-0675">Receptor</keyword>
<keyword id="KW-1185">Reference proteome</keyword>
<keyword id="KW-0677">Repeat</keyword>
<keyword id="KW-1211">Schizophrenia</keyword>
<keyword id="KW-0732">Signal</keyword>
<proteinExistence type="evidence at protein level"/>
<comment type="function">
    <text evidence="2 5 8 11 12 15 16 17 19">Receptor for RTN4, OMG and MAG (PubMed:12037567, PubMed:12068310, PubMed:12089450, PubMed:12426574, PubMed:12839991, PubMed:16712417, PubMed:18411262, PubMed:19052207). Functions as a receptor for the sialylated gangliosides GT1b and GM1 (PubMed:18411262). Besides, functions as a receptor for chondroitin sulfate proteoglycans (By similarity). Can also bind heparin (By similarity). Intracellular signaling cascades are triggered via the coreceptor NGFR (PubMed:12426574). Signaling mediates activation of Rho and downstream reorganization of the actin cytoskeleton (PubMed:16712417, PubMed:22325200). Mediates axonal growth inhibition (PubMed:12839991, PubMed:19052207, PubMed:28892071). Plays a role in regulating axon regeneration and neuronal plasticity in the adult central nervous system. Plays a role in postnatal brain development. Required for normal axon migration across the brain midline and normal formation of the corpus callosum. Protects motoneurons against apoptosis; protection against apoptosis is probably mediated via interaction with MAG. Acts in conjunction with RTN4 and LINGO1 in regulating neuronal precursor cell motility during cortical development. Like other family members, plays a role in restricting the number dendritic spines and the number of synapses that are formed during brain development (PubMed:22325200).</text>
</comment>
<comment type="subunit">
    <text evidence="2 6 7 8 11 12 16 17 18">Homodimer (PubMed:18411262). Interacts with MAG (PubMed:12089450, PubMed:12839991, PubMed:18411262, PubMed:19052207). Interacts with RTN4 (PubMed:12839991, PubMed:19052207). Interacts with NGFR (PubMed:12426574, PubMed:18411262, PubMed:19052207). Interacts with LINGO1 (PubMed:14966521, PubMed:19052207). Interacts with KIAA0319L (PubMed:20697954). Interacts with OLFM1; this inhibits interaction with LINGO1 and NGFR (By similarity). Interacts with OMG (PubMed:12068310, PubMed:12839991, PubMed:19052207).</text>
</comment>
<comment type="interaction">
    <interactant intactId="EBI-5240240">
        <id>Q9BZR6</id>
    </interactant>
    <interactant intactId="EBI-740785">
        <id>P49639</id>
        <label>HOXA1</label>
    </interactant>
    <organismsDiffer>false</organismsDiffer>
    <experiments>3</experiments>
</comment>
<comment type="interaction">
    <interactant intactId="EBI-5240240">
        <id>Q9BZR6</id>
    </interactant>
    <interactant intactId="EBI-5240269">
        <id>Q8IZA0</id>
        <label>KIAA0319L</label>
    </interactant>
    <organismsDiffer>false</organismsDiffer>
    <experiments>4</experiments>
</comment>
<comment type="interaction">
    <interactant intactId="EBI-5240240">
        <id>Q9BZR6</id>
    </interactant>
    <interactant intactId="EBI-740446">
        <id>P32242</id>
        <label>OTX1</label>
    </interactant>
    <organismsDiffer>false</organismsDiffer>
    <experiments>3</experiments>
</comment>
<comment type="subcellular location">
    <subcellularLocation>
        <location evidence="8 9 11 15 16">Cell membrane</location>
        <topology evidence="9">Lipid-anchor</topology>
        <topology evidence="9">GPI-anchor</topology>
    </subcellularLocation>
    <subcellularLocation>
        <location evidence="9">Membrane raft</location>
    </subcellularLocation>
    <subcellularLocation>
        <location evidence="2">Cell projection</location>
        <location evidence="2">Dendrite</location>
    </subcellularLocation>
    <subcellularLocation>
        <location evidence="2">Cell projection</location>
        <location evidence="2">Axon</location>
    </subcellularLocation>
    <subcellularLocation>
        <location evidence="1">Perikaryon</location>
    </subcellularLocation>
    <text evidence="2">Detected along dendrites and axons, close to synapses, but clearly excluded from synapses.</text>
</comment>
<comment type="tissue specificity">
    <text evidence="9">Widespread in the brain but highest levels in the gray matter. Low levels in heart and kidney; not expressed in oligodendrocytes (white matter).</text>
</comment>
<comment type="PTM">
    <text evidence="1">N-glycosylated. O-glycosylated. Contains terminal sialic acid groups on its glycan chains.</text>
</comment>
<comment type="disease" evidence="14 17 19">
    <disease id="DI-03626">
        <name>Schizophrenia</name>
        <acronym>SCZD</acronym>
        <description>A complex, multifactorial psychotic disorder or group of disorders characterized by disturbances in the form and content of thought (e.g. delusions, hallucinations), in mood (e.g. inappropriate affect), in sense of self and relationship to the external world (e.g. loss of ego boundaries, withdrawal), and in behavior (e.g bizarre or apparently purposeless behavior). Although it affects emotions, it is distinguished from mood disorders in which such disturbances are primary. Similarly, there may be mild impairment of cognitive function, and it is distinguished from the dementias in which disturbed cognitive function is considered primary. Some patients manifest schizophrenic as well as bipolar disorder symptoms and are often given the diagnosis of schizoaffective disorder.</description>
        <dbReference type="MIM" id="181500"/>
    </disease>
    <text>Disease susceptibility is associated with variants affecting the gene represented in this entry.</text>
</comment>
<comment type="similarity">
    <text evidence="20">Belongs to the Nogo receptor family.</text>
</comment>
<comment type="online information" name="Protein Spotlight">
    <link uri="https://www.proteinspotlight.org/back_issues/069"/>
    <text>Nerve regrowth: nipped by a no-go - Issue 69 of April 2006</text>
</comment>
<sequence>MKRASAGGSRLLAWVLWLQAWQVAAPCPGACVCYNEPKVTTSCPQQGLQAVPVGIPAASQRIFLHGNRISHVPAASFRACRNLTILWLHSNVLARIDAAAFTGLALLEQLDLSDNAQLRSVDPATFHGLGRLHTLHLDRCGLQELGPGLFRGLAALQYLYLQDNALQALPDDTFRDLGNLTHLFLHGNRISSVPERAFRGLHSLDRLLLHQNRVAHVHPHAFRDLGRLMTLYLFANNLSALPTEALAPLRALQYLRLNDNPWVCDCRARPLWAWLQKFRGSSSEVPCSLPQRLAGRDLKRLAANDLQGCAVATGPYHPIWTGRATDEEPLGLPKCCQPDAADKASVLEPGRPASAGNALKGRVPPGDSPPGNGSGPRHINDSPFGTLPGSAEPPLTAVRPEGSEPPGFPTSGPRRRPGCSRKNRTRSHCRLGQAGSGGGGTGDSEGSGALPSLTCSLTPLGLALVLWTVLGPC</sequence>
<organism>
    <name type="scientific">Homo sapiens</name>
    <name type="common">Human</name>
    <dbReference type="NCBI Taxonomy" id="9606"/>
    <lineage>
        <taxon>Eukaryota</taxon>
        <taxon>Metazoa</taxon>
        <taxon>Chordata</taxon>
        <taxon>Craniata</taxon>
        <taxon>Vertebrata</taxon>
        <taxon>Euteleostomi</taxon>
        <taxon>Mammalia</taxon>
        <taxon>Eutheria</taxon>
        <taxon>Euarchontoglires</taxon>
        <taxon>Primates</taxon>
        <taxon>Haplorrhini</taxon>
        <taxon>Catarrhini</taxon>
        <taxon>Hominidae</taxon>
        <taxon>Homo</taxon>
    </lineage>
</organism>